<reference key="1">
    <citation type="journal article" date="1992" name="J. Steroid Biochem. Mol. Biol.">
        <title>Cloning and regulation by glucocorticoid receptor ligands of a rat hsp90.</title>
        <authorList>
            <person name="McGuire J.A."/>
            <person name="Poellinger L."/>
            <person name="Wikstroem A.-C."/>
            <person name="Gustafsson J.-A."/>
        </authorList>
    </citation>
    <scope>NUCLEOTIDE SEQUENCE [MRNA]</scope>
</reference>
<reference key="2">
    <citation type="journal article" date="2005" name="J. Mol. Cell. Cardiol.">
        <title>Increased resistance to myocardial ischemia in the Brown Norway vs. Dahl S rat: role of nitric oxide synthase and Hsp90.</title>
        <authorList>
            <person name="Shi Y."/>
            <person name="Hutchins W."/>
            <person name="Ogawa H."/>
            <person name="Chang C.-C."/>
            <person name="Pritchard K.A. Jr."/>
            <person name="Zhang C."/>
            <person name="Khampang P."/>
            <person name="Lazar J."/>
            <person name="Jacob H.J."/>
            <person name="Rafiee P."/>
            <person name="Baker J.E."/>
        </authorList>
    </citation>
    <scope>NUCLEOTIDE SEQUENCE [MRNA]</scope>
    <source>
        <strain>Brown Norway/NHsdMcwi</strain>
        <strain>SS/JrHsdMcwi</strain>
        <tissue>Heart</tissue>
    </source>
</reference>
<reference key="3">
    <citation type="submission" date="2005-07" db="EMBL/GenBank/DDBJ databases">
        <title>Promoter analysis and gene regulation of rat 84 kDa heat shock protein.</title>
        <authorList>
            <person name="Chang Y.S."/>
            <person name="Chao C.C."/>
            <person name="Wang C.H."/>
            <person name="Lai Y.K."/>
        </authorList>
    </citation>
    <scope>NUCLEOTIDE SEQUENCE [GENOMIC DNA]</scope>
</reference>
<reference key="4">
    <citation type="journal article" date="2004" name="Genome Res.">
        <title>The status, quality, and expansion of the NIH full-length cDNA project: the Mammalian Gene Collection (MGC).</title>
        <authorList>
            <consortium name="The MGC Project Team"/>
        </authorList>
    </citation>
    <scope>NUCLEOTIDE SEQUENCE [LARGE SCALE MRNA]</scope>
    <source>
        <tissue>Testis</tissue>
    </source>
</reference>
<reference key="5">
    <citation type="journal article" date="1988" name="Anal. Biochem.">
        <title>Two-step purification and N-terminal amino acid sequence analysis of the rat Mr 90,000 heat shock protein.</title>
        <authorList>
            <person name="Denis M."/>
        </authorList>
    </citation>
    <scope>PROTEIN SEQUENCE OF 2-26</scope>
</reference>
<reference key="6">
    <citation type="journal article" date="2001" name="Protoplasma">
        <title>Isolation and quantification of the heat shock protein 90 alpha and beta isoforms from rat liver.</title>
        <authorList>
            <person name="Langer T."/>
            <person name="Fasold H."/>
        </authorList>
    </citation>
    <scope>PROTEIN SEQUENCE OF 2-16</scope>
    <source>
        <strain>Sprague-Dawley</strain>
        <tissue>Liver</tissue>
    </source>
</reference>
<reference key="7">
    <citation type="submission" date="2006-11" db="UniProtKB">
        <authorList>
            <person name="Lubec G."/>
            <person name="Afjehi-Sadat L."/>
        </authorList>
    </citation>
    <scope>PROTEIN SEQUENCE OF 181-196 AND 320-330</scope>
    <scope>IDENTIFICATION BY MASS SPECTROMETRY</scope>
    <source>
        <strain>Sprague-Dawley</strain>
        <tissue>Spinal cord</tissue>
    </source>
</reference>
<reference key="8">
    <citation type="journal article" date="1996" name="J. Biol. Chem.">
        <title>Heat shock protein 84 forms a complex with mutant p53 protein predominantly within a cytoplasmic compartment of the cell.</title>
        <authorList>
            <person name="Sepehrnia B."/>
            <person name="Paz I.B."/>
            <person name="Dasgupta G."/>
            <person name="Momand J."/>
        </authorList>
    </citation>
    <scope>PROTEIN SEQUENCE OF 205-218; 306-330 AND 413-427</scope>
    <scope>SUBCELLULAR LOCATION</scope>
    <scope>INTERACTION WITH TP53</scope>
    <source>
        <tissue>Embryo</tissue>
    </source>
</reference>
<reference key="9">
    <citation type="journal article" date="2012" name="Nat. Commun.">
        <title>Quantitative maps of protein phosphorylation sites across 14 different rat organs and tissues.</title>
        <authorList>
            <person name="Lundby A."/>
            <person name="Secher A."/>
            <person name="Lage K."/>
            <person name="Nordsborg N.B."/>
            <person name="Dmytriyev A."/>
            <person name="Lundby C."/>
            <person name="Olsen J.V."/>
        </authorList>
    </citation>
    <scope>PHOSPHORYLATION [LARGE SCALE ANALYSIS] AT SER-226; SER-255; SER-261 AND SER-445</scope>
    <scope>IDENTIFICATION BY MASS SPECTROMETRY [LARGE SCALE ANALYSIS]</scope>
</reference>
<reference key="10">
    <citation type="journal article" date="2017" name="J. Cell. Biochem.">
        <title>Interaction of a Novel Chaperone PhLP2A With the Heat Shock Protein Hsp90.</title>
        <authorList>
            <person name="Krzemien-Ojak L."/>
            <person name="Goral A."/>
            <person name="Joachimiak E."/>
            <person name="Filipek A."/>
            <person name="Fabczak H."/>
        </authorList>
    </citation>
    <scope>INTERACTION WITH PDCL3</scope>
</reference>
<feature type="initiator methionine" description="Removed" evidence="7 9">
    <location>
        <position position="1"/>
    </location>
</feature>
<feature type="chain" id="PRO_0000062920" description="Heat shock protein HSP 90-beta">
    <location>
        <begin position="2"/>
        <end position="724"/>
    </location>
</feature>
<feature type="region of interest" description="Interaction with TP53" evidence="3">
    <location>
        <begin position="2"/>
        <end position="527"/>
    </location>
</feature>
<feature type="region of interest" description="Interaction with BIRC2" evidence="3">
    <location>
        <begin position="2"/>
        <end position="214"/>
    </location>
</feature>
<feature type="region of interest" description="Interaction with NR3C1" evidence="4">
    <location>
        <begin position="9"/>
        <end position="231"/>
    </location>
</feature>
<feature type="region of interest" description="Interaction with AHSA1" evidence="3">
    <location>
        <begin position="215"/>
        <end position="552"/>
    </location>
</feature>
<feature type="region of interest" description="Disordered" evidence="6">
    <location>
        <begin position="222"/>
        <end position="270"/>
    </location>
</feature>
<feature type="region of interest" description="Interaction with NR3C1" evidence="4">
    <location>
        <begin position="264"/>
        <end position="608"/>
    </location>
</feature>
<feature type="region of interest" description="Interaction with NR1D1" evidence="4">
    <location>
        <begin position="620"/>
        <end position="723"/>
    </location>
</feature>
<feature type="region of interest" description="Disordered" evidence="6">
    <location>
        <begin position="694"/>
        <end position="724"/>
    </location>
</feature>
<feature type="short sequence motif" description="TPR repeat-binding">
    <location>
        <begin position="720"/>
        <end position="724"/>
    </location>
</feature>
<feature type="compositionally biased region" description="Acidic residues" evidence="6">
    <location>
        <begin position="225"/>
        <end position="244"/>
    </location>
</feature>
<feature type="binding site" evidence="1">
    <location>
        <position position="46"/>
    </location>
    <ligand>
        <name>ATP</name>
        <dbReference type="ChEBI" id="CHEBI:30616"/>
    </ligand>
</feature>
<feature type="binding site" evidence="1">
    <location>
        <position position="88"/>
    </location>
    <ligand>
        <name>ATP</name>
        <dbReference type="ChEBI" id="CHEBI:30616"/>
    </ligand>
</feature>
<feature type="binding site" evidence="1">
    <location>
        <position position="107"/>
    </location>
    <ligand>
        <name>ATP</name>
        <dbReference type="ChEBI" id="CHEBI:30616"/>
    </ligand>
</feature>
<feature type="binding site" evidence="1">
    <location>
        <position position="133"/>
    </location>
    <ligand>
        <name>ATP</name>
        <dbReference type="ChEBI" id="CHEBI:30616"/>
    </ligand>
</feature>
<feature type="binding site" evidence="1">
    <location>
        <position position="392"/>
    </location>
    <ligand>
        <name>ATP</name>
        <dbReference type="ChEBI" id="CHEBI:30616"/>
    </ligand>
</feature>
<feature type="site" description="Cleaved under oxidative stress" evidence="3">
    <location>
        <begin position="126"/>
        <end position="127"/>
    </location>
</feature>
<feature type="modified residue" description="N6-succinyllysine" evidence="4">
    <location>
        <position position="219"/>
    </location>
</feature>
<feature type="modified residue" description="Phosphoserine" evidence="12">
    <location>
        <position position="226"/>
    </location>
</feature>
<feature type="modified residue" description="Phosphoserine" evidence="12">
    <location>
        <position position="255"/>
    </location>
</feature>
<feature type="modified residue" description="Phosphoserine" evidence="12">
    <location>
        <position position="261"/>
    </location>
</feature>
<feature type="modified residue" description="Phosphothreonine" evidence="3">
    <location>
        <position position="297"/>
    </location>
</feature>
<feature type="modified residue" description="Phosphotyrosine" evidence="3">
    <location>
        <position position="301"/>
    </location>
</feature>
<feature type="modified residue" description="Phosphotyrosine" evidence="4">
    <location>
        <position position="305"/>
    </location>
</feature>
<feature type="modified residue" description="Phosphoserine" evidence="3">
    <location>
        <position position="307"/>
    </location>
</feature>
<feature type="modified residue" description="N6-malonyllysine" evidence="1">
    <location>
        <position position="399"/>
    </location>
</feature>
<feature type="modified residue" description="N6-acetyllysine" evidence="3">
    <location>
        <position position="435"/>
    </location>
</feature>
<feature type="modified residue" description="Phosphoserine" evidence="12">
    <location>
        <position position="445"/>
    </location>
</feature>
<feature type="modified residue" description="Phosphothreonine" evidence="3">
    <location>
        <position position="479"/>
    </location>
</feature>
<feature type="modified residue" description="N6-acetyllysine" evidence="3">
    <location>
        <position position="481"/>
    </location>
</feature>
<feature type="modified residue" description="Phosphotyrosine" evidence="4">
    <location>
        <position position="484"/>
    </location>
</feature>
<feature type="modified residue" description="N6-methylated lysine; alternate" evidence="3">
    <location>
        <position position="531"/>
    </location>
</feature>
<feature type="modified residue" description="N6-succinyllysine; alternate" evidence="4">
    <location>
        <position position="531"/>
    </location>
</feature>
<feature type="modified residue" description="N6-methylated lysine" evidence="3">
    <location>
        <position position="574"/>
    </location>
</feature>
<feature type="modified residue" description="N6-succinyllysine" evidence="4">
    <location>
        <position position="577"/>
    </location>
</feature>
<feature type="modified residue" description="S-nitrosocysteine" evidence="3">
    <location>
        <position position="590"/>
    </location>
</feature>
<feature type="modified residue" description="N6-acetyllysine" evidence="4">
    <location>
        <position position="624"/>
    </location>
</feature>
<feature type="modified residue" description="Phosphoserine" evidence="3">
    <location>
        <position position="669"/>
    </location>
</feature>
<feature type="modified residue" description="Phosphoserine; by PLK2 and PLK3" evidence="3">
    <location>
        <position position="718"/>
    </location>
</feature>
<feature type="glycosylation site" description="O-linked (GlcNAc) serine" evidence="1">
    <location>
        <position position="434"/>
    </location>
</feature>
<feature type="glycosylation site" description="O-linked (GlcNAc) serine" evidence="1">
    <location>
        <position position="452"/>
    </location>
</feature>
<feature type="sequence conflict" description="In Ref. 5; AA sequence." evidence="11" ref="5">
    <original>HH</original>
    <variation>QK</variation>
    <location>
        <begin position="6"/>
        <end position="7"/>
    </location>
</feature>
<feature type="sequence conflict" description="In Ref. 5; AA sequence." evidence="11" ref="5">
    <original>E</original>
    <variation>P</variation>
    <location>
        <position position="11"/>
    </location>
</feature>
<feature type="sequence conflict" description="In Ref. 5; AA sequence." evidence="11" ref="5">
    <original>F</original>
    <variation>T</variation>
    <location>
        <position position="17"/>
    </location>
</feature>
<feature type="sequence conflict" description="In Ref. 5; AA sequence." evidence="11" ref="5">
    <original>E</original>
    <variation>F</variation>
    <location>
        <position position="20"/>
    </location>
</feature>
<feature type="sequence conflict" description="In Ref. 4; AAH82009." evidence="11" ref="4">
    <original>S</original>
    <variation>F</variation>
    <location>
        <position position="26"/>
    </location>
</feature>
<feature type="sequence conflict" description="In Ref. 1; AAB23369." evidence="11" ref="1">
    <original>R</original>
    <variation>A</variation>
    <location>
        <position position="82"/>
    </location>
</feature>
<feature type="sequence conflict" description="In Ref. 1; AAB23369." evidence="11" ref="1">
    <original>E</original>
    <variation>D</variation>
    <location>
        <position position="368"/>
    </location>
</feature>
<feature type="sequence conflict" description="In Ref. 3; ABE27999." evidence="11" ref="3">
    <original>N</original>
    <variation>D</variation>
    <location>
        <position position="375"/>
    </location>
</feature>
<feature type="sequence conflict" description="In Ref. 1; AAB23369." evidence="11" ref="1">
    <original>K</original>
    <variation>R</variation>
    <location>
        <position position="559"/>
    </location>
</feature>
<feature type="sequence conflict" description="In Ref. 1; AAB23369." evidence="11" ref="1">
    <original>LSSGFSLEDPQ</original>
    <variation>SSLASHFRRPK</variation>
    <location>
        <begin position="664"/>
        <end position="674"/>
    </location>
</feature>
<sequence>MPEEVHHGEEEVETFAFQAEIAQLMSLIINTFYSNKEIFLRELISNASDALDKIRYESLTDPSKLDSGKELKIDIIPNPQERTLTLVDTGIGMTKADLINNLGTIAKSGTKAFMEALQAGADISMIGQFGVGFYSAYLVAEKVVVITKHNDDEQYAWESSAGGSFTVRADHGEPIGRGTKVILHLKEDQTEYLEERRVKEVVKKHSQFIGYPITLYLEKEREKEISDDEAEEEKGEKEEEDKEDEEKPKIEDVGSDEEDDSGKDKKKKTKKIKEKYIDQEELNKTKPIWTRNPDDITQEEYGEFYKSLTNDWEDHLAVKHFSVEGQLEFRALLFIPRRAPFDLFENKKKKNNIKLYVRRVFIMDSCDELIPEYLNFIRGVVDSEDLPLNISREMLQQSKILKVIRKNIVKKCLELFSELAEDKENYKKFYEAFSKNLKLGIHEDSTNRRRLSELLRYHTSQSGDEMTSLSEYVSRMKETQKSIYYITGESKEQVANSAFVERVRKRGFEVVYMTEPIDEYCVQQLKEFDGKSLVSVTKEGLELPEDEEEKKKMEESKAKFENLCKLMKEILDKKVEKVTISNRLVSSPCCIVTSTYGWTANMERIMKAQALRDNSTMGYMMAKKHLEINPDHPIVETLRQKAEADKNDKAVKDLVVLLFETALLSSGFSLEDPQTHSNRIYRMIKLGLGIDEDEVTAEEPSAAVPDEIPPLEGDEDASRMEEVD</sequence>
<proteinExistence type="evidence at protein level"/>
<name>HS90B_RAT</name>
<comment type="function">
    <text evidence="3">Molecular chaperone that promotes the maturation, structural maintenance and proper regulation of specific target proteins involved for instance in cell cycle control and signal transduction. Undergoes a functional cycle linked to its ATPase activity. This cycle probably induces conformational changes in the client proteins, thereby causing their activation. Interacts dynamically with various co-chaperones that modulate its substrate recognition, ATPase cycle and chaperone function. Engages with a range of client protein classes via its interaction with various co-chaperone proteins or complexes, that act as adapters, simultaneously able to interact with the specific client and the central chaperone itself. Recruitment of ATP and co-chaperone followed by client protein forms a functional chaperone. After the completion of the chaperoning process, properly folded client protein and co-chaperone leave HSP90 in an ADP-bound partially open conformation and finally, ADP is released from HSP90 which acquires an open conformation for the next cycle. Apart from its chaperone activity, it also plays a role in the regulation of the transcription machinery. HSP90 and its co-chaperones modulate transcription at least at three different levels. They first alter the steady-state levels of certain transcription factors in response to various physiological cues. Second, they modulate the activity of certain epigenetic modifiers, such as histone deacetylases or DNA methyl transferases, and thereby respond to the change in the environment. Third, they participate in the eviction of histones from the promoter region of certain genes and thereby turn on gene expression. Antagonizes STUB1-mediated inhibition of TGF-beta signaling via inhibition of STUB1-mediated SMAD3 ubiquitination and degradation. Promotes cell differentiation by chaperoning BIRC2 and thereby protecting from auto-ubiquitination and degradation by the proteasomal machinery. Main chaperone involved in the phosphorylation/activation of the STAT1 by chaperoning both JAK2 and PRKCE under heat shock and in turn, activates its own transcription. Involved in the translocation into ERGIC (endoplasmic reticulum-Golgi intermediate compartment) of leaderless cargos (lacking the secretion signal sequence) such as the interleukin 1/IL-1; the translocation process is mediated by the cargo receptor TMED10.</text>
</comment>
<comment type="activity regulation">
    <text evidence="3">In the resting state, through the dimerization of its C-terminal domain, HSP90 forms a homodimer which is defined as the open conformation. Upon ATP-binding, the N-terminal domain undergoes significant conformational changes and comes in contact to form an active closed conformation. After HSP90 finishes its chaperoning tasks of assisting the proper folding, stabilization and activation of client proteins under the active state, ATP molecule is hydrolyzed to ADP which then dissociates from HSP90 and directs the protein back to the resting state.</text>
</comment>
<comment type="subunit">
    <text evidence="3 4 8 10">Monomer. Homodimer (By similarity). Forms a complex with CDK6 and CDC37. Interacts with UNC45A; binding to UNC45A involves 2 UNC45A monomers per HSP90AB1 dimer (By similarity). Interacts with CHORDC1 (By similarity). Interacts with DNAJC7. Interacts with FKBP4. May interact with NWD1. Interacts with SGTA. Interacts with HSF1 in an ATP-dependent manner. Interacts with MET; the interaction suppresses MET kinase activity. Interacts with ERBB2 in an ATP-dependent manner; the interaction suppresses ERBB2 kinase activity. Interacts with HIF1A, KEAP1 and RHOBTB2. Interacts with STUB1 and SMAD3. Interacts with XPO1 and AHSA1. Interacts with BIRC2. Interacts with KCNQ4; promotes cell surface expression of KCNQ4. Interacts with BIRC2; prevents auto-ubiquitination and degradation of its client protein BIRC2. Interacts with NOS3. Interacts with AHR; interaction is inhibited by HSP90AB1 phosphorylation on Ser-226 and Ser-255. Interacts with STIP1 and CDC37; upon SMYD2-dependent methylation. Interacts with JAK2 and PRKCE; promotes functional activation in a heat shock-dependent manner. Interacts with HSP90AA1; interaction is constitutive. HSP90AB1-CDC37 chaperone complex interacts with inactive MAPK7 (via N-terminal half) in resting cells; the interaction is MAP2K5-independent and prevents from ubiquitination and proteasomal degradation. Interacts with CDC25A; prevents heat shock-mediated CDC25A degradation and contributes to cell cycle progression (By similarity). Interacts with TP53 (via DNA binding domain); suppresses TP53 aggregation and prevents from irreversible thermal inactivation (PubMed:8663025). Interacts with TGFB1 processed form (LAP); inhibits latent TGFB1 activation (By similarity). Interacts with TRIM8; prevents nucleus translocation of phosphorylated STAT3 and HSP90AB1 (By similarity). Interacts with NR3C1 (via domain NR LBD) and NR1D1 (via domain NR LBD) (By similarity). Interacts with PDCL3 (PubMed:27496612). Interacts with TTC4 (via TPR repeats) (By similarity). Interacts with IL1B; the interaction facilitates cargo translocation into the ERGIC (By similarity).</text>
</comment>
<comment type="subcellular location">
    <subcellularLocation>
        <location evidence="10">Cytoplasm</location>
    </subcellularLocation>
    <subcellularLocation>
        <location evidence="3">Melanosome</location>
    </subcellularLocation>
    <subcellularLocation>
        <location evidence="3">Nucleus</location>
    </subcellularLocation>
    <subcellularLocation>
        <location evidence="3">Secreted</location>
    </subcellularLocation>
    <subcellularLocation>
        <location evidence="3">Cell membrane</location>
    </subcellularLocation>
    <subcellularLocation>
        <location evidence="5">Dynein axonemal particle</location>
    </subcellularLocation>
    <text evidence="3">Translocates with BIRC2 from the nucleus to the cytoplasm during differentiation. Secreted when associated with TGFB1 processed form (LAP).</text>
</comment>
<comment type="domain">
    <text evidence="2">The TPR repeat-binding motif mediates interaction with TPR repeat-containing proteins.</text>
</comment>
<comment type="PTM">
    <text evidence="3">Ubiquitinated in the presence of STUB1-UBE2D1 complex (in vitro).</text>
</comment>
<comment type="PTM">
    <text evidence="3">ISGylated.</text>
</comment>
<comment type="PTM">
    <text evidence="3">S-nitrosylated; negatively regulates the ATPase activity.</text>
</comment>
<comment type="PTM">
    <text evidence="3">Phosphorylation at Tyr-301 by SRC is induced by lipopolysaccharide. Phosphorylation at Ser-226 and Ser-255 inhibits AHR interaction.</text>
</comment>
<comment type="PTM">
    <text evidence="3">Methylated by SMYD2; facilitates dimerization and chaperone complex formation; promotes cancer cell proliferation.</text>
</comment>
<comment type="PTM">
    <text evidence="3">Cleaved following oxidative stress resulting in HSP90AB1 protein radicals formation; disrupts the chaperoning function and the degradation of its client proteins.</text>
</comment>
<comment type="similarity">
    <text evidence="11">Belongs to the heat shock protein 90 family.</text>
</comment>
<gene>
    <name type="primary">Hsp90ab1</name>
    <name type="synonym">Hsp84</name>
    <name evidence="3" type="synonym">Hspc3</name>
    <name type="synonym">Hspcb</name>
</gene>
<accession>P34058</accession>
<accession>Q1PSW2</accession>
<accession>Q66H55</accession>
<accession>Q68GV5</accession>
<accession>Q9QWC6</accession>
<protein>
    <recommendedName>
        <fullName>Heat shock protein HSP 90-beta</fullName>
    </recommendedName>
    <alternativeName>
        <fullName>Heat shock 84 kDa</fullName>
        <shortName>HSP 84</shortName>
        <shortName>HSP84</shortName>
    </alternativeName>
</protein>
<dbReference type="EMBL" id="S45392">
    <property type="protein sequence ID" value="AAB23369.1"/>
    <property type="molecule type" value="mRNA"/>
</dbReference>
<dbReference type="EMBL" id="AY695392">
    <property type="protein sequence ID" value="AAT99568.1"/>
    <property type="molecule type" value="mRNA"/>
</dbReference>
<dbReference type="EMBL" id="AY695393">
    <property type="protein sequence ID" value="AAT99569.1"/>
    <property type="molecule type" value="mRNA"/>
</dbReference>
<dbReference type="EMBL" id="DQ022068">
    <property type="protein sequence ID" value="ABE27999.1"/>
    <property type="molecule type" value="Genomic_DNA"/>
</dbReference>
<dbReference type="EMBL" id="BC082009">
    <property type="protein sequence ID" value="AAH82009.1"/>
    <property type="molecule type" value="mRNA"/>
</dbReference>
<dbReference type="PIR" id="S71306">
    <property type="entry name" value="S71306"/>
</dbReference>
<dbReference type="RefSeq" id="NP_001004082.3">
    <property type="nucleotide sequence ID" value="NM_001004082.3"/>
</dbReference>
<dbReference type="SMR" id="P34058"/>
<dbReference type="BioGRID" id="256892">
    <property type="interactions" value="15"/>
</dbReference>
<dbReference type="CORUM" id="P34058"/>
<dbReference type="FunCoup" id="P34058">
    <property type="interactions" value="3384"/>
</dbReference>
<dbReference type="IntAct" id="P34058">
    <property type="interactions" value="8"/>
</dbReference>
<dbReference type="MINT" id="P34058"/>
<dbReference type="STRING" id="10116.ENSRNOP00000026920"/>
<dbReference type="GlyCosmos" id="P34058">
    <property type="glycosylation" value="2 sites, No reported glycans"/>
</dbReference>
<dbReference type="GlyGen" id="P34058">
    <property type="glycosylation" value="3 sites, 1 O-linked glycan (1 site)"/>
</dbReference>
<dbReference type="iPTMnet" id="P34058"/>
<dbReference type="PhosphoSitePlus" id="P34058"/>
<dbReference type="jPOST" id="P34058"/>
<dbReference type="PaxDb" id="10116-ENSRNOP00000026920"/>
<dbReference type="ABCD" id="P34058">
    <property type="antibodies" value="1 sequenced antibody"/>
</dbReference>
<dbReference type="Ensembl" id="ENSRNOT00000086986.2">
    <property type="protein sequence ID" value="ENSRNOP00000074112.2"/>
    <property type="gene ID" value="ENSRNOG00000019834.7"/>
</dbReference>
<dbReference type="GeneID" id="301252"/>
<dbReference type="KEGG" id="rno:301252"/>
<dbReference type="UCSC" id="RGD:1303075">
    <property type="organism name" value="rat"/>
</dbReference>
<dbReference type="AGR" id="RGD:1303075"/>
<dbReference type="CTD" id="3326"/>
<dbReference type="RGD" id="1303075">
    <property type="gene designation" value="Hsp90ab1"/>
</dbReference>
<dbReference type="eggNOG" id="KOG0019">
    <property type="taxonomic scope" value="Eukaryota"/>
</dbReference>
<dbReference type="GeneTree" id="ENSGT01020000230401"/>
<dbReference type="HOGENOM" id="CLU_006684_1_3_1"/>
<dbReference type="InParanoid" id="P34058"/>
<dbReference type="OMA" id="TRMKAEQ"/>
<dbReference type="OrthoDB" id="59470at9989"/>
<dbReference type="PhylomeDB" id="P34058"/>
<dbReference type="TreeFam" id="TF300686"/>
<dbReference type="Reactome" id="R-RNO-168928">
    <property type="pathway name" value="DDX58/IFIH1-mediated induction of interferon-alpha/beta"/>
</dbReference>
<dbReference type="Reactome" id="R-RNO-2029482">
    <property type="pathway name" value="Regulation of actin dynamics for phagocytic cup formation"/>
</dbReference>
<dbReference type="Reactome" id="R-RNO-3371497">
    <property type="pathway name" value="HSP90 chaperone cycle for steroid hormone receptors (SHR) in the presence of ligand"/>
</dbReference>
<dbReference type="Reactome" id="R-RNO-3371511">
    <property type="pathway name" value="HSF1 activation"/>
</dbReference>
<dbReference type="Reactome" id="R-RNO-3371568">
    <property type="pathway name" value="Attenuation phase"/>
</dbReference>
<dbReference type="Reactome" id="R-RNO-3371571">
    <property type="pathway name" value="HSF1-dependent transactivation"/>
</dbReference>
<dbReference type="Reactome" id="R-RNO-399954">
    <property type="pathway name" value="Sema3A PAK dependent Axon repulsion"/>
</dbReference>
<dbReference type="Reactome" id="R-RNO-6798695">
    <property type="pathway name" value="Neutrophil degranulation"/>
</dbReference>
<dbReference type="Reactome" id="R-RNO-844456">
    <property type="pathway name" value="The NLRP3 inflammasome"/>
</dbReference>
<dbReference type="Reactome" id="R-RNO-8852276">
    <property type="pathway name" value="The role of GTSE1 in G2/M progression after G2 checkpoint"/>
</dbReference>
<dbReference type="Reactome" id="R-RNO-8937144">
    <property type="pathway name" value="Aryl hydrocarbon receptor signalling"/>
</dbReference>
<dbReference type="Reactome" id="R-RNO-8939211">
    <property type="pathway name" value="ESR-mediated signaling"/>
</dbReference>
<dbReference type="Reactome" id="R-RNO-9013418">
    <property type="pathway name" value="RHOBTB2 GTPase cycle"/>
</dbReference>
<dbReference type="Reactome" id="R-RNO-9018519">
    <property type="pathway name" value="Estrogen-dependent gene expression"/>
</dbReference>
<dbReference type="PRO" id="PR:P34058"/>
<dbReference type="Proteomes" id="UP000002494">
    <property type="component" value="Chromosome 9"/>
</dbReference>
<dbReference type="Bgee" id="ENSRNOG00000019834">
    <property type="expression patterns" value="Expressed in Ammon's horn and 20 other cell types or tissues"/>
</dbReference>
<dbReference type="ExpressionAtlas" id="P34058">
    <property type="expression patterns" value="baseline and differential"/>
</dbReference>
<dbReference type="GO" id="GO:0016324">
    <property type="term" value="C:apical plasma membrane"/>
    <property type="evidence" value="ECO:0000314"/>
    <property type="project" value="RGD"/>
</dbReference>
<dbReference type="GO" id="GO:0034751">
    <property type="term" value="C:aryl hydrocarbon receptor complex"/>
    <property type="evidence" value="ECO:0000250"/>
    <property type="project" value="UniProtKB"/>
</dbReference>
<dbReference type="GO" id="GO:0044295">
    <property type="term" value="C:axonal growth cone"/>
    <property type="evidence" value="ECO:0000266"/>
    <property type="project" value="RGD"/>
</dbReference>
<dbReference type="GO" id="GO:0016323">
    <property type="term" value="C:basolateral plasma membrane"/>
    <property type="evidence" value="ECO:0000314"/>
    <property type="project" value="RGD"/>
</dbReference>
<dbReference type="GO" id="GO:0031526">
    <property type="term" value="C:brush border membrane"/>
    <property type="evidence" value="ECO:0000314"/>
    <property type="project" value="RGD"/>
</dbReference>
<dbReference type="GO" id="GO:0009986">
    <property type="term" value="C:cell surface"/>
    <property type="evidence" value="ECO:0000314"/>
    <property type="project" value="RGD"/>
</dbReference>
<dbReference type="GO" id="GO:0008180">
    <property type="term" value="C:COP9 signalosome"/>
    <property type="evidence" value="ECO:0000266"/>
    <property type="project" value="RGD"/>
</dbReference>
<dbReference type="GO" id="GO:0005737">
    <property type="term" value="C:cytoplasm"/>
    <property type="evidence" value="ECO:0000266"/>
    <property type="project" value="RGD"/>
</dbReference>
<dbReference type="GO" id="GO:0005829">
    <property type="term" value="C:cytosol"/>
    <property type="evidence" value="ECO:0000318"/>
    <property type="project" value="GO_Central"/>
</dbReference>
<dbReference type="GO" id="GO:0044294">
    <property type="term" value="C:dendritic growth cone"/>
    <property type="evidence" value="ECO:0000266"/>
    <property type="project" value="RGD"/>
</dbReference>
<dbReference type="GO" id="GO:0120293">
    <property type="term" value="C:dynein axonemal particle"/>
    <property type="evidence" value="ECO:0000250"/>
    <property type="project" value="UniProtKB"/>
</dbReference>
<dbReference type="GO" id="GO:0005576">
    <property type="term" value="C:extracellular region"/>
    <property type="evidence" value="ECO:0000250"/>
    <property type="project" value="UniProtKB"/>
</dbReference>
<dbReference type="GO" id="GO:1990565">
    <property type="term" value="C:HSP90-CDC37 chaperone complex"/>
    <property type="evidence" value="ECO:0000266"/>
    <property type="project" value="RGD"/>
</dbReference>
<dbReference type="GO" id="GO:0016234">
    <property type="term" value="C:inclusion body"/>
    <property type="evidence" value="ECO:0000314"/>
    <property type="project" value="RGD"/>
</dbReference>
<dbReference type="GO" id="GO:0043202">
    <property type="term" value="C:lysosomal lumen"/>
    <property type="evidence" value="ECO:0000304"/>
    <property type="project" value="Reactome"/>
</dbReference>
<dbReference type="GO" id="GO:0005765">
    <property type="term" value="C:lysosomal membrane"/>
    <property type="evidence" value="ECO:0000314"/>
    <property type="project" value="ParkinsonsUK-UCL"/>
</dbReference>
<dbReference type="GO" id="GO:0042470">
    <property type="term" value="C:melanosome"/>
    <property type="evidence" value="ECO:0007669"/>
    <property type="project" value="UniProtKB-SubCell"/>
</dbReference>
<dbReference type="GO" id="GO:0043025">
    <property type="term" value="C:neuronal cell body"/>
    <property type="evidence" value="ECO:0000266"/>
    <property type="project" value="RGD"/>
</dbReference>
<dbReference type="GO" id="GO:0005634">
    <property type="term" value="C:nucleus"/>
    <property type="evidence" value="ECO:0000250"/>
    <property type="project" value="UniProtKB"/>
</dbReference>
<dbReference type="GO" id="GO:1990917">
    <property type="term" value="C:ooplasm"/>
    <property type="evidence" value="ECO:0000314"/>
    <property type="project" value="RGD"/>
</dbReference>
<dbReference type="GO" id="GO:0048471">
    <property type="term" value="C:perinuclear region of cytoplasm"/>
    <property type="evidence" value="ECO:0000266"/>
    <property type="project" value="RGD"/>
</dbReference>
<dbReference type="GO" id="GO:0005886">
    <property type="term" value="C:plasma membrane"/>
    <property type="evidence" value="ECO:0000318"/>
    <property type="project" value="GO_Central"/>
</dbReference>
<dbReference type="GO" id="GO:0101031">
    <property type="term" value="C:protein folding chaperone complex"/>
    <property type="evidence" value="ECO:0000315"/>
    <property type="project" value="ARUK-UCL"/>
</dbReference>
<dbReference type="GO" id="GO:0032991">
    <property type="term" value="C:protein-containing complex"/>
    <property type="evidence" value="ECO:0000266"/>
    <property type="project" value="RGD"/>
</dbReference>
<dbReference type="GO" id="GO:1990913">
    <property type="term" value="C:sperm head plasma membrane"/>
    <property type="evidence" value="ECO:0000314"/>
    <property type="project" value="RGD"/>
</dbReference>
<dbReference type="GO" id="GO:0005524">
    <property type="term" value="F:ATP binding"/>
    <property type="evidence" value="ECO:0000314"/>
    <property type="project" value="RGD"/>
</dbReference>
<dbReference type="GO" id="GO:0016887">
    <property type="term" value="F:ATP hydrolysis activity"/>
    <property type="evidence" value="ECO:0000318"/>
    <property type="project" value="GO_Central"/>
</dbReference>
<dbReference type="GO" id="GO:0043008">
    <property type="term" value="F:ATP-dependent protein binding"/>
    <property type="evidence" value="ECO:0000266"/>
    <property type="project" value="RGD"/>
</dbReference>
<dbReference type="GO" id="GO:0140662">
    <property type="term" value="F:ATP-dependent protein folding chaperone"/>
    <property type="evidence" value="ECO:0007669"/>
    <property type="project" value="InterPro"/>
</dbReference>
<dbReference type="GO" id="GO:0002135">
    <property type="term" value="F:CTP binding"/>
    <property type="evidence" value="ECO:0000314"/>
    <property type="project" value="RGD"/>
</dbReference>
<dbReference type="GO" id="GO:0032564">
    <property type="term" value="F:dATP binding"/>
    <property type="evidence" value="ECO:0000314"/>
    <property type="project" value="RGD"/>
</dbReference>
<dbReference type="GO" id="GO:0097718">
    <property type="term" value="F:disordered domain specific binding"/>
    <property type="evidence" value="ECO:0000266"/>
    <property type="project" value="RGD"/>
</dbReference>
<dbReference type="GO" id="GO:0070182">
    <property type="term" value="F:DNA polymerase binding"/>
    <property type="evidence" value="ECO:0000266"/>
    <property type="project" value="RGD"/>
</dbReference>
<dbReference type="GO" id="GO:0003725">
    <property type="term" value="F:double-stranded RNA binding"/>
    <property type="evidence" value="ECO:0000266"/>
    <property type="project" value="RGD"/>
</dbReference>
<dbReference type="GO" id="GO:0005525">
    <property type="term" value="F:GTP binding"/>
    <property type="evidence" value="ECO:0000314"/>
    <property type="project" value="RGD"/>
</dbReference>
<dbReference type="GO" id="GO:0031072">
    <property type="term" value="F:heat shock protein binding"/>
    <property type="evidence" value="ECO:0000266"/>
    <property type="project" value="RGD"/>
</dbReference>
<dbReference type="GO" id="GO:1901363">
    <property type="term" value="F:heterocyclic compound binding"/>
    <property type="evidence" value="ECO:0000353"/>
    <property type="project" value="RGD"/>
</dbReference>
<dbReference type="GO" id="GO:0042826">
    <property type="term" value="F:histone deacetylase binding"/>
    <property type="evidence" value="ECO:0000266"/>
    <property type="project" value="RGD"/>
</dbReference>
<dbReference type="GO" id="GO:1990226">
    <property type="term" value="F:histone methyltransferase binding"/>
    <property type="evidence" value="ECO:0000266"/>
    <property type="project" value="RGD"/>
</dbReference>
<dbReference type="GO" id="GO:0042802">
    <property type="term" value="F:identical protein binding"/>
    <property type="evidence" value="ECO:0000266"/>
    <property type="project" value="RGD"/>
</dbReference>
<dbReference type="GO" id="GO:0019900">
    <property type="term" value="F:kinase binding"/>
    <property type="evidence" value="ECO:0000266"/>
    <property type="project" value="RGD"/>
</dbReference>
<dbReference type="GO" id="GO:0042277">
    <property type="term" value="F:peptide binding"/>
    <property type="evidence" value="ECO:0000266"/>
    <property type="project" value="RGD"/>
</dbReference>
<dbReference type="GO" id="GO:0140597">
    <property type="term" value="F:protein carrier chaperone"/>
    <property type="evidence" value="ECO:0000303"/>
    <property type="project" value="ParkinsonsUK-UCL"/>
</dbReference>
<dbReference type="GO" id="GO:0046983">
    <property type="term" value="F:protein dimerization activity"/>
    <property type="evidence" value="ECO:0000250"/>
    <property type="project" value="UniProtKB"/>
</dbReference>
<dbReference type="GO" id="GO:0044183">
    <property type="term" value="F:protein folding chaperone"/>
    <property type="evidence" value="ECO:0000315"/>
    <property type="project" value="ARUK-UCL"/>
</dbReference>
<dbReference type="GO" id="GO:0042803">
    <property type="term" value="F:protein homodimerization activity"/>
    <property type="evidence" value="ECO:0000266"/>
    <property type="project" value="RGD"/>
</dbReference>
<dbReference type="GO" id="GO:0019901">
    <property type="term" value="F:protein kinase binding"/>
    <property type="evidence" value="ECO:0000266"/>
    <property type="project" value="RGD"/>
</dbReference>
<dbReference type="GO" id="GO:0072542">
    <property type="term" value="F:protein phosphatase activator activity"/>
    <property type="evidence" value="ECO:0000266"/>
    <property type="project" value="RGD"/>
</dbReference>
<dbReference type="GO" id="GO:0141069">
    <property type="term" value="F:receptor ligand inhibitor activity"/>
    <property type="evidence" value="ECO:0000250"/>
    <property type="project" value="UniProtKB"/>
</dbReference>
<dbReference type="GO" id="GO:0017098">
    <property type="term" value="F:sulfonylurea receptor binding"/>
    <property type="evidence" value="ECO:0000353"/>
    <property type="project" value="RGD"/>
</dbReference>
<dbReference type="GO" id="GO:0048156">
    <property type="term" value="F:tau protein binding"/>
    <property type="evidence" value="ECO:0000266"/>
    <property type="project" value="RGD"/>
</dbReference>
<dbReference type="GO" id="GO:0044325">
    <property type="term" value="F:transmembrane transporter binding"/>
    <property type="evidence" value="ECO:0000353"/>
    <property type="project" value="RGD"/>
</dbReference>
<dbReference type="GO" id="GO:0031625">
    <property type="term" value="F:ubiquitin protein ligase binding"/>
    <property type="evidence" value="ECO:0000266"/>
    <property type="project" value="RGD"/>
</dbReference>
<dbReference type="GO" id="GO:0051082">
    <property type="term" value="F:unfolded protein binding"/>
    <property type="evidence" value="ECO:0000318"/>
    <property type="project" value="GO_Central"/>
</dbReference>
<dbReference type="GO" id="GO:0002134">
    <property type="term" value="F:UTP binding"/>
    <property type="evidence" value="ECO:0000314"/>
    <property type="project" value="RGD"/>
</dbReference>
<dbReference type="GO" id="GO:0034605">
    <property type="term" value="P:cellular response to heat"/>
    <property type="evidence" value="ECO:0000266"/>
    <property type="project" value="RGD"/>
</dbReference>
<dbReference type="GO" id="GO:0071353">
    <property type="term" value="P:cellular response to interleukin-4"/>
    <property type="evidence" value="ECO:0000266"/>
    <property type="project" value="RGD"/>
</dbReference>
<dbReference type="GO" id="GO:0061684">
    <property type="term" value="P:chaperone-mediated autophagy"/>
    <property type="evidence" value="ECO:0000303"/>
    <property type="project" value="ParkinsonsUK-UCL"/>
</dbReference>
<dbReference type="GO" id="GO:0051131">
    <property type="term" value="P:chaperone-mediated protein complex assembly"/>
    <property type="evidence" value="ECO:0000266"/>
    <property type="project" value="RGD"/>
</dbReference>
<dbReference type="GO" id="GO:0061077">
    <property type="term" value="P:chaperone-mediated protein folding"/>
    <property type="evidence" value="ECO:0000315"/>
    <property type="project" value="ARUK-UCL"/>
</dbReference>
<dbReference type="GO" id="GO:0043066">
    <property type="term" value="P:negative regulation of apoptotic process"/>
    <property type="evidence" value="ECO:0000266"/>
    <property type="project" value="RGD"/>
</dbReference>
<dbReference type="GO" id="GO:1903660">
    <property type="term" value="P:negative regulation of complement-dependent cytotoxicity"/>
    <property type="evidence" value="ECO:0000315"/>
    <property type="project" value="RGD"/>
</dbReference>
<dbReference type="GO" id="GO:0043524">
    <property type="term" value="P:negative regulation of neuron apoptotic process"/>
    <property type="evidence" value="ECO:0000315"/>
    <property type="project" value="RGD"/>
</dbReference>
<dbReference type="GO" id="GO:1901799">
    <property type="term" value="P:negative regulation of proteasomal protein catabolic process"/>
    <property type="evidence" value="ECO:0000315"/>
    <property type="project" value="ARUK-UCL"/>
</dbReference>
<dbReference type="GO" id="GO:0032435">
    <property type="term" value="P:negative regulation of proteasomal ubiquitin-dependent protein catabolic process"/>
    <property type="evidence" value="ECO:0000250"/>
    <property type="project" value="UniProtKB"/>
</dbReference>
<dbReference type="GO" id="GO:0001890">
    <property type="term" value="P:placenta development"/>
    <property type="evidence" value="ECO:0000266"/>
    <property type="project" value="RGD"/>
</dbReference>
<dbReference type="GO" id="GO:0045597">
    <property type="term" value="P:positive regulation of cell differentiation"/>
    <property type="evidence" value="ECO:0000266"/>
    <property type="project" value="RGD"/>
</dbReference>
<dbReference type="GO" id="GO:0045793">
    <property type="term" value="P:positive regulation of cell size"/>
    <property type="evidence" value="ECO:0000315"/>
    <property type="project" value="RGD"/>
</dbReference>
<dbReference type="GO" id="GO:0042307">
    <property type="term" value="P:positive regulation of protein import into nucleus"/>
    <property type="evidence" value="ECO:0000315"/>
    <property type="project" value="RGD"/>
</dbReference>
<dbReference type="GO" id="GO:2000010">
    <property type="term" value="P:positive regulation of protein localization to cell surface"/>
    <property type="evidence" value="ECO:0000266"/>
    <property type="project" value="RGD"/>
</dbReference>
<dbReference type="GO" id="GO:0030511">
    <property type="term" value="P:positive regulation of transforming growth factor beta receptor signaling pathway"/>
    <property type="evidence" value="ECO:0000250"/>
    <property type="project" value="UniProtKB"/>
</dbReference>
<dbReference type="GO" id="GO:0006457">
    <property type="term" value="P:protein folding"/>
    <property type="evidence" value="ECO:0000266"/>
    <property type="project" value="RGD"/>
</dbReference>
<dbReference type="GO" id="GO:0050821">
    <property type="term" value="P:protein stabilization"/>
    <property type="evidence" value="ECO:0000318"/>
    <property type="project" value="GO_Central"/>
</dbReference>
<dbReference type="GO" id="GO:0051726">
    <property type="term" value="P:regulation of cell cycle"/>
    <property type="evidence" value="ECO:0000250"/>
    <property type="project" value="UniProtKB"/>
</dbReference>
<dbReference type="GO" id="GO:0061635">
    <property type="term" value="P:regulation of protein complex stability"/>
    <property type="evidence" value="ECO:0000303"/>
    <property type="project" value="ParkinsonsUK-UCL"/>
</dbReference>
<dbReference type="GO" id="GO:0032880">
    <property type="term" value="P:regulation of protein localization"/>
    <property type="evidence" value="ECO:0000266"/>
    <property type="project" value="RGD"/>
</dbReference>
<dbReference type="GO" id="GO:0031396">
    <property type="term" value="P:regulation of protein ubiquitination"/>
    <property type="evidence" value="ECO:0000266"/>
    <property type="project" value="RGD"/>
</dbReference>
<dbReference type="GO" id="GO:0042220">
    <property type="term" value="P:response to cocaine"/>
    <property type="evidence" value="ECO:0000270"/>
    <property type="project" value="RGD"/>
</dbReference>
<dbReference type="GO" id="GO:0009651">
    <property type="term" value="P:response to salt stress"/>
    <property type="evidence" value="ECO:0000270"/>
    <property type="project" value="RGD"/>
</dbReference>
<dbReference type="GO" id="GO:0006986">
    <property type="term" value="P:response to unfolded protein"/>
    <property type="evidence" value="ECO:0000304"/>
    <property type="project" value="RGD"/>
</dbReference>
<dbReference type="GO" id="GO:0009410">
    <property type="term" value="P:response to xenobiotic stimulus"/>
    <property type="evidence" value="ECO:0000270"/>
    <property type="project" value="RGD"/>
</dbReference>
<dbReference type="GO" id="GO:0097435">
    <property type="term" value="P:supramolecular fiber organization"/>
    <property type="evidence" value="ECO:0000266"/>
    <property type="project" value="RGD"/>
</dbReference>
<dbReference type="GO" id="GO:1905323">
    <property type="term" value="P:telomerase holoenzyme complex assembly"/>
    <property type="evidence" value="ECO:0000266"/>
    <property type="project" value="RGD"/>
</dbReference>
<dbReference type="GO" id="GO:0007004">
    <property type="term" value="P:telomere maintenance via telomerase"/>
    <property type="evidence" value="ECO:0000266"/>
    <property type="project" value="RGD"/>
</dbReference>
<dbReference type="GO" id="GO:0019062">
    <property type="term" value="P:virion attachment to host cell"/>
    <property type="evidence" value="ECO:0000266"/>
    <property type="project" value="RGD"/>
</dbReference>
<dbReference type="CDD" id="cd16927">
    <property type="entry name" value="HATPase_Hsp90-like"/>
    <property type="match status" value="1"/>
</dbReference>
<dbReference type="FunFam" id="1.20.120.790:FF:000001">
    <property type="entry name" value="Heat shock protein 90 alpha"/>
    <property type="match status" value="1"/>
</dbReference>
<dbReference type="FunFam" id="3.30.230.80:FF:000001">
    <property type="entry name" value="Heat shock protein 90 alpha"/>
    <property type="match status" value="1"/>
</dbReference>
<dbReference type="FunFam" id="3.40.50.11260:FF:000001">
    <property type="entry name" value="Heat shock protein 90 alpha"/>
    <property type="match status" value="1"/>
</dbReference>
<dbReference type="FunFam" id="3.30.565.10:FF:000204">
    <property type="entry name" value="Heat shock protein HSP 90-beta"/>
    <property type="match status" value="1"/>
</dbReference>
<dbReference type="Gene3D" id="3.30.230.80">
    <property type="match status" value="1"/>
</dbReference>
<dbReference type="Gene3D" id="3.40.50.11260">
    <property type="match status" value="1"/>
</dbReference>
<dbReference type="Gene3D" id="1.20.120.790">
    <property type="entry name" value="Heat shock protein 90, C-terminal domain"/>
    <property type="match status" value="1"/>
</dbReference>
<dbReference type="Gene3D" id="3.30.565.10">
    <property type="entry name" value="Histidine kinase-like ATPase, C-terminal domain"/>
    <property type="match status" value="1"/>
</dbReference>
<dbReference type="HAMAP" id="MF_00505">
    <property type="entry name" value="HSP90"/>
    <property type="match status" value="1"/>
</dbReference>
<dbReference type="InterPro" id="IPR036890">
    <property type="entry name" value="HATPase_C_sf"/>
</dbReference>
<dbReference type="InterPro" id="IPR019805">
    <property type="entry name" value="Heat_shock_protein_90_CS"/>
</dbReference>
<dbReference type="InterPro" id="IPR037196">
    <property type="entry name" value="HSP90_C"/>
</dbReference>
<dbReference type="InterPro" id="IPR001404">
    <property type="entry name" value="Hsp90_fam"/>
</dbReference>
<dbReference type="InterPro" id="IPR020575">
    <property type="entry name" value="Hsp90_N"/>
</dbReference>
<dbReference type="InterPro" id="IPR020568">
    <property type="entry name" value="Ribosomal_Su5_D2-typ_SF"/>
</dbReference>
<dbReference type="NCBIfam" id="NF003555">
    <property type="entry name" value="PRK05218.1"/>
    <property type="match status" value="1"/>
</dbReference>
<dbReference type="PANTHER" id="PTHR11528">
    <property type="entry name" value="HEAT SHOCK PROTEIN 90 FAMILY MEMBER"/>
    <property type="match status" value="1"/>
</dbReference>
<dbReference type="Pfam" id="PF13589">
    <property type="entry name" value="HATPase_c_3"/>
    <property type="match status" value="1"/>
</dbReference>
<dbReference type="Pfam" id="PF00183">
    <property type="entry name" value="HSP90"/>
    <property type="match status" value="1"/>
</dbReference>
<dbReference type="PIRSF" id="PIRSF002583">
    <property type="entry name" value="Hsp90"/>
    <property type="match status" value="1"/>
</dbReference>
<dbReference type="PRINTS" id="PR00775">
    <property type="entry name" value="HEATSHOCK90"/>
</dbReference>
<dbReference type="SMART" id="SM00387">
    <property type="entry name" value="HATPase_c"/>
    <property type="match status" value="1"/>
</dbReference>
<dbReference type="SUPFAM" id="SSF55874">
    <property type="entry name" value="ATPase domain of HSP90 chaperone/DNA topoisomerase II/histidine kinase"/>
    <property type="match status" value="1"/>
</dbReference>
<dbReference type="SUPFAM" id="SSF110942">
    <property type="entry name" value="HSP90 C-terminal domain"/>
    <property type="match status" value="1"/>
</dbReference>
<dbReference type="SUPFAM" id="SSF54211">
    <property type="entry name" value="Ribosomal protein S5 domain 2-like"/>
    <property type="match status" value="1"/>
</dbReference>
<dbReference type="PROSITE" id="PS00298">
    <property type="entry name" value="HSP90"/>
    <property type="match status" value="1"/>
</dbReference>
<evidence type="ECO:0000250" key="1"/>
<evidence type="ECO:0000250" key="2">
    <source>
        <dbReference type="UniProtKB" id="P07900"/>
    </source>
</evidence>
<evidence type="ECO:0000250" key="3">
    <source>
        <dbReference type="UniProtKB" id="P08238"/>
    </source>
</evidence>
<evidence type="ECO:0000250" key="4">
    <source>
        <dbReference type="UniProtKB" id="P11499"/>
    </source>
</evidence>
<evidence type="ECO:0000250" key="5">
    <source>
        <dbReference type="UniProtKB" id="Q6AZV1"/>
    </source>
</evidence>
<evidence type="ECO:0000256" key="6">
    <source>
        <dbReference type="SAM" id="MobiDB-lite"/>
    </source>
</evidence>
<evidence type="ECO:0000269" key="7">
    <source>
    </source>
</evidence>
<evidence type="ECO:0000269" key="8">
    <source>
    </source>
</evidence>
<evidence type="ECO:0000269" key="9">
    <source>
    </source>
</evidence>
<evidence type="ECO:0000269" key="10">
    <source>
    </source>
</evidence>
<evidence type="ECO:0000305" key="11"/>
<evidence type="ECO:0007744" key="12">
    <source>
    </source>
</evidence>
<keyword id="KW-0007">Acetylation</keyword>
<keyword id="KW-0067">ATP-binding</keyword>
<keyword id="KW-1003">Cell membrane</keyword>
<keyword id="KW-0143">Chaperone</keyword>
<keyword id="KW-0963">Cytoplasm</keyword>
<keyword id="KW-0903">Direct protein sequencing</keyword>
<keyword id="KW-0325">Glycoprotein</keyword>
<keyword id="KW-0472">Membrane</keyword>
<keyword id="KW-0488">Methylation</keyword>
<keyword id="KW-0547">Nucleotide-binding</keyword>
<keyword id="KW-0539">Nucleus</keyword>
<keyword id="KW-0597">Phosphoprotein</keyword>
<keyword id="KW-1185">Reference proteome</keyword>
<keyword id="KW-0702">S-nitrosylation</keyword>
<keyword id="KW-0964">Secreted</keyword>
<keyword id="KW-0346">Stress response</keyword>
<keyword id="KW-0832">Ubl conjugation</keyword>
<organism>
    <name type="scientific">Rattus norvegicus</name>
    <name type="common">Rat</name>
    <dbReference type="NCBI Taxonomy" id="10116"/>
    <lineage>
        <taxon>Eukaryota</taxon>
        <taxon>Metazoa</taxon>
        <taxon>Chordata</taxon>
        <taxon>Craniata</taxon>
        <taxon>Vertebrata</taxon>
        <taxon>Euteleostomi</taxon>
        <taxon>Mammalia</taxon>
        <taxon>Eutheria</taxon>
        <taxon>Euarchontoglires</taxon>
        <taxon>Glires</taxon>
        <taxon>Rodentia</taxon>
        <taxon>Myomorpha</taxon>
        <taxon>Muroidea</taxon>
        <taxon>Muridae</taxon>
        <taxon>Murinae</taxon>
        <taxon>Rattus</taxon>
    </lineage>
</organism>